<keyword id="KW-0028">Amino-acid biosynthesis</keyword>
<keyword id="KW-0963">Cytoplasm</keyword>
<keyword id="KW-0368">Histidine biosynthesis</keyword>
<keyword id="KW-0456">Lyase</keyword>
<keyword id="KW-1185">Reference proteome</keyword>
<organism>
    <name type="scientific">Dinoroseobacter shibae (strain DSM 16493 / NCIMB 14021 / DFL 12)</name>
    <dbReference type="NCBI Taxonomy" id="398580"/>
    <lineage>
        <taxon>Bacteria</taxon>
        <taxon>Pseudomonadati</taxon>
        <taxon>Pseudomonadota</taxon>
        <taxon>Alphaproteobacteria</taxon>
        <taxon>Rhodobacterales</taxon>
        <taxon>Roseobacteraceae</taxon>
        <taxon>Dinoroseobacter</taxon>
    </lineage>
</organism>
<dbReference type="EC" id="4.2.1.19" evidence="1"/>
<dbReference type="EMBL" id="CP000830">
    <property type="protein sequence ID" value="ABV92539.1"/>
    <property type="molecule type" value="Genomic_DNA"/>
</dbReference>
<dbReference type="RefSeq" id="WP_012177471.1">
    <property type="nucleotide sequence ID" value="NC_009952.1"/>
</dbReference>
<dbReference type="SMR" id="A8LQZ6"/>
<dbReference type="STRING" id="398580.Dshi_0794"/>
<dbReference type="KEGG" id="dsh:Dshi_0794"/>
<dbReference type="eggNOG" id="COG0131">
    <property type="taxonomic scope" value="Bacteria"/>
</dbReference>
<dbReference type="HOGENOM" id="CLU_044308_2_0_5"/>
<dbReference type="OrthoDB" id="9813612at2"/>
<dbReference type="UniPathway" id="UPA00031">
    <property type="reaction ID" value="UER00011"/>
</dbReference>
<dbReference type="Proteomes" id="UP000006833">
    <property type="component" value="Chromosome"/>
</dbReference>
<dbReference type="GO" id="GO:0005737">
    <property type="term" value="C:cytoplasm"/>
    <property type="evidence" value="ECO:0007669"/>
    <property type="project" value="UniProtKB-SubCell"/>
</dbReference>
<dbReference type="GO" id="GO:0004424">
    <property type="term" value="F:imidazoleglycerol-phosphate dehydratase activity"/>
    <property type="evidence" value="ECO:0007669"/>
    <property type="project" value="UniProtKB-UniRule"/>
</dbReference>
<dbReference type="GO" id="GO:0000105">
    <property type="term" value="P:L-histidine biosynthetic process"/>
    <property type="evidence" value="ECO:0007669"/>
    <property type="project" value="UniProtKB-UniRule"/>
</dbReference>
<dbReference type="CDD" id="cd07914">
    <property type="entry name" value="IGPD"/>
    <property type="match status" value="1"/>
</dbReference>
<dbReference type="FunFam" id="3.30.230.40:FF:000001">
    <property type="entry name" value="Imidazoleglycerol-phosphate dehydratase HisB"/>
    <property type="match status" value="1"/>
</dbReference>
<dbReference type="FunFam" id="3.30.230.40:FF:000003">
    <property type="entry name" value="Imidazoleglycerol-phosphate dehydratase HisB"/>
    <property type="match status" value="1"/>
</dbReference>
<dbReference type="Gene3D" id="3.30.230.40">
    <property type="entry name" value="Imidazole glycerol phosphate dehydratase, domain 1"/>
    <property type="match status" value="2"/>
</dbReference>
<dbReference type="HAMAP" id="MF_00076">
    <property type="entry name" value="HisB"/>
    <property type="match status" value="1"/>
</dbReference>
<dbReference type="InterPro" id="IPR038494">
    <property type="entry name" value="IGPD_sf"/>
</dbReference>
<dbReference type="InterPro" id="IPR000807">
    <property type="entry name" value="ImidazoleglycerolP_deHydtase"/>
</dbReference>
<dbReference type="InterPro" id="IPR020565">
    <property type="entry name" value="ImidazoleglycerP_deHydtase_CS"/>
</dbReference>
<dbReference type="InterPro" id="IPR020568">
    <property type="entry name" value="Ribosomal_Su5_D2-typ_SF"/>
</dbReference>
<dbReference type="NCBIfam" id="NF002109">
    <property type="entry name" value="PRK00951.1-5"/>
    <property type="match status" value="1"/>
</dbReference>
<dbReference type="NCBIfam" id="NF002111">
    <property type="entry name" value="PRK00951.2-1"/>
    <property type="match status" value="1"/>
</dbReference>
<dbReference type="NCBIfam" id="NF002114">
    <property type="entry name" value="PRK00951.2-4"/>
    <property type="match status" value="1"/>
</dbReference>
<dbReference type="PANTHER" id="PTHR23133:SF2">
    <property type="entry name" value="IMIDAZOLEGLYCEROL-PHOSPHATE DEHYDRATASE"/>
    <property type="match status" value="1"/>
</dbReference>
<dbReference type="PANTHER" id="PTHR23133">
    <property type="entry name" value="IMIDAZOLEGLYCEROL-PHOSPHATE DEHYDRATASE HIS7"/>
    <property type="match status" value="1"/>
</dbReference>
<dbReference type="Pfam" id="PF00475">
    <property type="entry name" value="IGPD"/>
    <property type="match status" value="1"/>
</dbReference>
<dbReference type="SUPFAM" id="SSF54211">
    <property type="entry name" value="Ribosomal protein S5 domain 2-like"/>
    <property type="match status" value="2"/>
</dbReference>
<dbReference type="PROSITE" id="PS00954">
    <property type="entry name" value="IGP_DEHYDRATASE_1"/>
    <property type="match status" value="1"/>
</dbReference>
<dbReference type="PROSITE" id="PS00955">
    <property type="entry name" value="IGP_DEHYDRATASE_2"/>
    <property type="match status" value="1"/>
</dbReference>
<sequence>MRRATITRKTAETDISVEIDLDGTGVYDNRTGVGFFDHMLDQLSRHALIDMTVRCDGDLHIDDHHTVEDVGIALGQALAEAVGDKRGIVRYGSCLLPMDDALVRAALDISGRPYLVWDVALPTAKIGTFDTELVREFFQALATHGGLTLHVTRLAGINSHHIAEAAFKSVARALRAALETDPRKANAIPSTKGSL</sequence>
<feature type="chain" id="PRO_1000075246" description="Imidazoleglycerol-phosphate dehydratase">
    <location>
        <begin position="1"/>
        <end position="195"/>
    </location>
</feature>
<evidence type="ECO:0000255" key="1">
    <source>
        <dbReference type="HAMAP-Rule" id="MF_00076"/>
    </source>
</evidence>
<reference key="1">
    <citation type="journal article" date="2010" name="ISME J.">
        <title>The complete genome sequence of the algal symbiont Dinoroseobacter shibae: a hitchhiker's guide to life in the sea.</title>
        <authorList>
            <person name="Wagner-Dobler I."/>
            <person name="Ballhausen B."/>
            <person name="Berger M."/>
            <person name="Brinkhoff T."/>
            <person name="Buchholz I."/>
            <person name="Bunk B."/>
            <person name="Cypionka H."/>
            <person name="Daniel R."/>
            <person name="Drepper T."/>
            <person name="Gerdts G."/>
            <person name="Hahnke S."/>
            <person name="Han C."/>
            <person name="Jahn D."/>
            <person name="Kalhoefer D."/>
            <person name="Kiss H."/>
            <person name="Klenk H.P."/>
            <person name="Kyrpides N."/>
            <person name="Liebl W."/>
            <person name="Liesegang H."/>
            <person name="Meincke L."/>
            <person name="Pati A."/>
            <person name="Petersen J."/>
            <person name="Piekarski T."/>
            <person name="Pommerenke C."/>
            <person name="Pradella S."/>
            <person name="Pukall R."/>
            <person name="Rabus R."/>
            <person name="Stackebrandt E."/>
            <person name="Thole S."/>
            <person name="Thompson L."/>
            <person name="Tielen P."/>
            <person name="Tomasch J."/>
            <person name="von Jan M."/>
            <person name="Wanphrut N."/>
            <person name="Wichels A."/>
            <person name="Zech H."/>
            <person name="Simon M."/>
        </authorList>
    </citation>
    <scope>NUCLEOTIDE SEQUENCE [LARGE SCALE GENOMIC DNA]</scope>
    <source>
        <strain>DSM 16493 / NCIMB 14021 / DFL 12</strain>
    </source>
</reference>
<proteinExistence type="inferred from homology"/>
<gene>
    <name evidence="1" type="primary">hisB</name>
    <name type="ordered locus">Dshi_0794</name>
</gene>
<name>HIS7_DINSH</name>
<protein>
    <recommendedName>
        <fullName evidence="1">Imidazoleglycerol-phosphate dehydratase</fullName>
        <shortName evidence="1">IGPD</shortName>
        <ecNumber evidence="1">4.2.1.19</ecNumber>
    </recommendedName>
</protein>
<accession>A8LQZ6</accession>
<comment type="catalytic activity">
    <reaction evidence="1">
        <text>D-erythro-1-(imidazol-4-yl)glycerol 3-phosphate = 3-(imidazol-4-yl)-2-oxopropyl phosphate + H2O</text>
        <dbReference type="Rhea" id="RHEA:11040"/>
        <dbReference type="ChEBI" id="CHEBI:15377"/>
        <dbReference type="ChEBI" id="CHEBI:57766"/>
        <dbReference type="ChEBI" id="CHEBI:58278"/>
        <dbReference type="EC" id="4.2.1.19"/>
    </reaction>
</comment>
<comment type="pathway">
    <text evidence="1">Amino-acid biosynthesis; L-histidine biosynthesis; L-histidine from 5-phospho-alpha-D-ribose 1-diphosphate: step 6/9.</text>
</comment>
<comment type="subcellular location">
    <subcellularLocation>
        <location evidence="1">Cytoplasm</location>
    </subcellularLocation>
</comment>
<comment type="similarity">
    <text evidence="1">Belongs to the imidazoleglycerol-phosphate dehydratase family.</text>
</comment>